<reference key="1">
    <citation type="journal article" date="1992" name="Genes Dev.">
        <title>The chicken limb deformity gene encodes nuclear proteins expressed in specific cell types during morphogenesis.</title>
        <authorList>
            <person name="Trumpp A."/>
            <person name="Blundell P.A."/>
            <person name="de la Pompa J.L."/>
            <person name="Zeller R."/>
        </authorList>
    </citation>
    <scope>NUCLEOTIDE SEQUENCE [MRNA]</scope>
    <source>
        <strain>White leghorn</strain>
        <tissue>Embryo</tissue>
    </source>
</reference>
<sequence>MEGGNAGCSRQLPERAGPAESEPDVFTTFAVRTLLGLTTKLESVTPKEEEAVLKAFQPLHIDVNTQANNRYERNDNDGVDDSENQHCESCTSDQADPMSGSRAEPELEPEPAGQNEILLPHLRSVQTSLSESDNDAILVQGTLVHTTSDTESDGESKDPDADETGTSKCGLNNAALSAVALDGNNQSKEESDSEGYGHSDDTVGRDDTELHPPISQWLPRKLDSILEHDSSGKDRTLMDEQFSCLLATGECSPELSGEDQRPSADNVSFHKAALTERSFQLPAFFSGLRVRKKGLNTEDGETITEIKPRENDLALLKLRQPVKKSNITSGLTTKKKSSEPKASPTFLEQLSHLLNIDVSKNDERTQDSGAGFGETEDSDEGPENKASGQTEPLFPSEEIKSSPAESALDVFKALFTRPPKKETTADPSELEAIKRKMRNEKESLKAVFERSKSKPGDGPSDKSPDLSPSEQDDKTPGRLQTVWPPPKANHEEVKVGLKYTEAEYQAAILHLKREHKEEIETLKSQFELRVFHIRGEHAVSTAQLEETIAHLKNELDNKLNRRNEEARDIGVSTEDDNLPKTYRNVCIQTDRETFIKPSEEENRAVKNNQIVPKKLNISSLTHSISTQGENKDSYDVPSSESVLSCQPKQMLPPSPPPPPPPPPPPPPPPPPFSDSSLPGLVPPPPPLPTGPTSVTPHFAFGPPLPPQLSEGCRDFQAPAPPAPPPLPGLGPPVPPPLPGSGLPPPPPPPGPGLFFNSTLSSSQGPRKPAIEPSRPMKPLYWTRIQLQGSRKTAIPTLWESLEEPDILDTTEFEYLFSKDTTQEKRKPLSETYEKKTKAKKIIKLLDGKRSQTVGILISSLHLEMKDIQQAILCVDDSVVDLETLEALYENRAQKDELEKIEQYYQTSKEEELKLLDKPEQFLYELSQIPNFTERAQCIIFQSVFSEGITSVHRKVDIITRVSKALLNMTSVKEILGLILAFGNYMNGGNRTRGQADGFGLEILPKLKDVKSRDNRINLVDYVVIYYLRHCDKEAGTDKSIFPLPEPQDFFQASQVKFEDLIKDLRKLKRDLEASEKQMKLVCRESSEEHLQPFKEKLEEFFQKAKEERKKEESSLENAQKCFEETVGYFGIKPKPGEKEITPNYVFTVWYEFCSDFKTIWKRESKSISKERIKVAQQSVSKLTAEKKVETKKINPTASLKERLRQKEANVNAN</sequence>
<feature type="chain" id="PRO_0000194885" description="Formin">
    <location>
        <begin position="1"/>
        <end position="1213"/>
    </location>
</feature>
<feature type="domain" description="FH1">
    <location>
        <begin position="652"/>
        <end position="751"/>
    </location>
</feature>
<feature type="domain" description="FH2" evidence="2">
    <location>
        <begin position="766"/>
        <end position="1182"/>
    </location>
</feature>
<feature type="region of interest" description="Disordered" evidence="3">
    <location>
        <begin position="1"/>
        <end position="24"/>
    </location>
</feature>
<feature type="region of interest" description="Disordered" evidence="3">
    <location>
        <begin position="66"/>
        <end position="111"/>
    </location>
</feature>
<feature type="region of interest" description="Disordered" evidence="3">
    <location>
        <begin position="144"/>
        <end position="169"/>
    </location>
</feature>
<feature type="region of interest" description="Disordered" evidence="3">
    <location>
        <begin position="183"/>
        <end position="216"/>
    </location>
</feature>
<feature type="region of interest" description="Disordered" evidence="3">
    <location>
        <begin position="357"/>
        <end position="489"/>
    </location>
</feature>
<feature type="region of interest" description="Disordered" evidence="3">
    <location>
        <begin position="624"/>
        <end position="774"/>
    </location>
</feature>
<feature type="region of interest" description="Disordered" evidence="3">
    <location>
        <begin position="1193"/>
        <end position="1213"/>
    </location>
</feature>
<feature type="coiled-coil region" evidence="1">
    <location>
        <begin position="428"/>
        <end position="450"/>
    </location>
</feature>
<feature type="coiled-coil region" evidence="1">
    <location>
        <begin position="503"/>
        <end position="572"/>
    </location>
</feature>
<feature type="coiled-coil region" evidence="1">
    <location>
        <begin position="1050"/>
        <end position="1125"/>
    </location>
</feature>
<feature type="compositionally biased region" description="Basic and acidic residues" evidence="3">
    <location>
        <begin position="187"/>
        <end position="210"/>
    </location>
</feature>
<feature type="compositionally biased region" description="Basic and acidic residues" evidence="3">
    <location>
        <begin position="431"/>
        <end position="464"/>
    </location>
</feature>
<feature type="compositionally biased region" description="Polar residues" evidence="3">
    <location>
        <begin position="636"/>
        <end position="647"/>
    </location>
</feature>
<feature type="compositionally biased region" description="Pro residues" evidence="3">
    <location>
        <begin position="650"/>
        <end position="672"/>
    </location>
</feature>
<feature type="compositionally biased region" description="Pro residues" evidence="3">
    <location>
        <begin position="680"/>
        <end position="689"/>
    </location>
</feature>
<feature type="compositionally biased region" description="Pro residues" evidence="3">
    <location>
        <begin position="718"/>
        <end position="751"/>
    </location>
</feature>
<feature type="compositionally biased region" description="Polar residues" evidence="3">
    <location>
        <begin position="755"/>
        <end position="764"/>
    </location>
</feature>
<gene>
    <name type="primary">LD</name>
</gene>
<protein>
    <recommendedName>
        <fullName>Formin</fullName>
    </recommendedName>
    <alternativeName>
        <fullName>Limb deformity protein</fullName>
    </alternativeName>
</protein>
<dbReference type="EMBL" id="X62681">
    <property type="protein sequence ID" value="CAA44555.1"/>
    <property type="molecule type" value="mRNA"/>
</dbReference>
<dbReference type="PIR" id="S24286">
    <property type="entry name" value="A41724"/>
</dbReference>
<dbReference type="RefSeq" id="NP_989754.1">
    <property type="nucleotide sequence ID" value="NM_204423.1"/>
</dbReference>
<dbReference type="SMR" id="Q05858"/>
<dbReference type="DIP" id="DIP-168N"/>
<dbReference type="FunCoup" id="Q05858">
    <property type="interactions" value="92"/>
</dbReference>
<dbReference type="STRING" id="9031.ENSGALP00000053556"/>
<dbReference type="GlyGen" id="Q05858">
    <property type="glycosylation" value="1 site"/>
</dbReference>
<dbReference type="PaxDb" id="9031-ENSGALP00000015810"/>
<dbReference type="GeneID" id="386747"/>
<dbReference type="KEGG" id="gga:386747"/>
<dbReference type="CTD" id="342184"/>
<dbReference type="VEuPathDB" id="HostDB:geneid_386747"/>
<dbReference type="eggNOG" id="KOG1922">
    <property type="taxonomic scope" value="Eukaryota"/>
</dbReference>
<dbReference type="InParanoid" id="Q05858"/>
<dbReference type="OrthoDB" id="427644at2759"/>
<dbReference type="PhylomeDB" id="Q05858"/>
<dbReference type="PRO" id="PR:Q05858"/>
<dbReference type="Proteomes" id="UP000000539">
    <property type="component" value="Unassembled WGS sequence"/>
</dbReference>
<dbReference type="GO" id="GO:0005884">
    <property type="term" value="C:actin filament"/>
    <property type="evidence" value="ECO:0007669"/>
    <property type="project" value="InterPro"/>
</dbReference>
<dbReference type="GO" id="GO:0005789">
    <property type="term" value="C:endoplasmic reticulum membrane"/>
    <property type="evidence" value="ECO:0000318"/>
    <property type="project" value="GO_Central"/>
</dbReference>
<dbReference type="GO" id="GO:0005634">
    <property type="term" value="C:nucleus"/>
    <property type="evidence" value="ECO:0000318"/>
    <property type="project" value="GO_Central"/>
</dbReference>
<dbReference type="GO" id="GO:0008017">
    <property type="term" value="F:microtubule binding"/>
    <property type="evidence" value="ECO:0007669"/>
    <property type="project" value="InterPro"/>
</dbReference>
<dbReference type="GO" id="GO:0030036">
    <property type="term" value="P:actin cytoskeleton organization"/>
    <property type="evidence" value="ECO:0000318"/>
    <property type="project" value="GO_Central"/>
</dbReference>
<dbReference type="GO" id="GO:0045010">
    <property type="term" value="P:actin nucleation"/>
    <property type="evidence" value="ECO:0007669"/>
    <property type="project" value="InterPro"/>
</dbReference>
<dbReference type="FunFam" id="1.20.58.2220:FF:000005">
    <property type="entry name" value="Formin 1"/>
    <property type="match status" value="1"/>
</dbReference>
<dbReference type="Gene3D" id="1.20.58.2220">
    <property type="entry name" value="Formin, FH2 domain"/>
    <property type="match status" value="1"/>
</dbReference>
<dbReference type="InterPro" id="IPR015425">
    <property type="entry name" value="FH2_Formin"/>
</dbReference>
<dbReference type="InterPro" id="IPR042201">
    <property type="entry name" value="FH2_Formin_sf"/>
</dbReference>
<dbReference type="InterPro" id="IPR001265">
    <property type="entry name" value="Formin_Cappuccino_subfam"/>
</dbReference>
<dbReference type="PANTHER" id="PTHR45920">
    <property type="entry name" value="FORMIN HOMOLOGY 2 DOMAIN CONTAINING, ISOFORM I"/>
    <property type="match status" value="1"/>
</dbReference>
<dbReference type="PANTHER" id="PTHR45920:SF7">
    <property type="entry name" value="FORMIN-G"/>
    <property type="match status" value="1"/>
</dbReference>
<dbReference type="Pfam" id="PF02181">
    <property type="entry name" value="FH2"/>
    <property type="match status" value="1"/>
</dbReference>
<dbReference type="PRINTS" id="PR00828">
    <property type="entry name" value="FORMIN"/>
</dbReference>
<dbReference type="SMART" id="SM00498">
    <property type="entry name" value="FH2"/>
    <property type="match status" value="1"/>
</dbReference>
<dbReference type="SUPFAM" id="SSF101447">
    <property type="entry name" value="Formin homology 2 domain (FH2 domain)"/>
    <property type="match status" value="1"/>
</dbReference>
<dbReference type="PROSITE" id="PS51444">
    <property type="entry name" value="FH2"/>
    <property type="match status" value="1"/>
</dbReference>
<evidence type="ECO:0000255" key="1"/>
<evidence type="ECO:0000255" key="2">
    <source>
        <dbReference type="PROSITE-ProRule" id="PRU00774"/>
    </source>
</evidence>
<evidence type="ECO:0000256" key="3">
    <source>
        <dbReference type="SAM" id="MobiDB-lite"/>
    </source>
</evidence>
<evidence type="ECO:0000305" key="4"/>
<accession>Q05858</accession>
<keyword id="KW-0025">Alternative splicing</keyword>
<keyword id="KW-0175">Coiled coil</keyword>
<keyword id="KW-0217">Developmental protein</keyword>
<keyword id="KW-0539">Nucleus</keyword>
<keyword id="KW-1185">Reference proteome</keyword>
<comment type="function">
    <text>Is important for morphogenesis of limb and kidney and may be involved in determining dorsoventral neural tube polarity and motor neuron induction. It may also have a function in differentiated cells or be involved in maintaining specific differentiated states.</text>
</comment>
<comment type="subcellular location">
    <subcellularLocation>
        <location>Nucleus</location>
    </subcellularLocation>
</comment>
<comment type="alternative products">
    <event type="alternative splicing"/>
    <isoform>
        <id>Q05858-1</id>
        <name>1</name>
        <sequence type="displayed"/>
    </isoform>
    <text>A number of isoforms are produced.</text>
</comment>
<comment type="tissue specificity">
    <text>Present in the adult brain, kidney, brain, heart and intestine and throughout the embryo.</text>
</comment>
<comment type="developmental stage">
    <text>In the developing limb bud, the protein is expressed in the apical ectodermal ridge and the mesenchymal compartment, predominantly in the posterior region. During kidney morphogenesis, expression is initially restricted to the epithelial compartment of the pronephros and mesonephros.</text>
</comment>
<comment type="similarity">
    <text evidence="4">Belongs to the formin homology family. Cappuccino subfamily.</text>
</comment>
<organism>
    <name type="scientific">Gallus gallus</name>
    <name type="common">Chicken</name>
    <dbReference type="NCBI Taxonomy" id="9031"/>
    <lineage>
        <taxon>Eukaryota</taxon>
        <taxon>Metazoa</taxon>
        <taxon>Chordata</taxon>
        <taxon>Craniata</taxon>
        <taxon>Vertebrata</taxon>
        <taxon>Euteleostomi</taxon>
        <taxon>Archelosauria</taxon>
        <taxon>Archosauria</taxon>
        <taxon>Dinosauria</taxon>
        <taxon>Saurischia</taxon>
        <taxon>Theropoda</taxon>
        <taxon>Coelurosauria</taxon>
        <taxon>Aves</taxon>
        <taxon>Neognathae</taxon>
        <taxon>Galloanserae</taxon>
        <taxon>Galliformes</taxon>
        <taxon>Phasianidae</taxon>
        <taxon>Phasianinae</taxon>
        <taxon>Gallus</taxon>
    </lineage>
</organism>
<name>FMN_CHICK</name>
<proteinExistence type="evidence at transcript level"/>